<feature type="initiator methionine" description="Removed" evidence="1">
    <location>
        <position position="1"/>
    </location>
</feature>
<feature type="chain" id="PRO_0000185886" description="Glutathione S-transferase omega-1">
    <location>
        <begin position="2"/>
        <end position="241"/>
    </location>
</feature>
<feature type="domain" description="GST N-terminal">
    <location>
        <begin position="22"/>
        <end position="101"/>
    </location>
</feature>
<feature type="domain" description="GST C-terminal">
    <location>
        <begin position="106"/>
        <end position="225"/>
    </location>
</feature>
<feature type="active site" description="Nucleophile" evidence="1">
    <location>
        <position position="32"/>
    </location>
</feature>
<feature type="binding site" evidence="1">
    <location>
        <position position="59"/>
    </location>
    <ligand>
        <name>glutathione</name>
        <dbReference type="ChEBI" id="CHEBI:57925"/>
    </ligand>
</feature>
<feature type="binding site" evidence="1">
    <location>
        <position position="72"/>
    </location>
    <ligand>
        <name>glutathione</name>
        <dbReference type="ChEBI" id="CHEBI:57925"/>
    </ligand>
</feature>
<feature type="binding site" evidence="1">
    <location>
        <begin position="85"/>
        <end position="86"/>
    </location>
    <ligand>
        <name>glutathione</name>
        <dbReference type="ChEBI" id="CHEBI:57925"/>
    </ligand>
</feature>
<feature type="modified residue" description="N-acetylserine" evidence="1">
    <location>
        <position position="2"/>
    </location>
</feature>
<feature type="modified residue" description="N6-acetyllysine" evidence="1">
    <location>
        <position position="57"/>
    </location>
</feature>
<feature type="modified residue" description="N6-acetyllysine" evidence="1">
    <location>
        <position position="143"/>
    </location>
</feature>
<feature type="modified residue" description="N6-acetyllysine" evidence="1">
    <location>
        <position position="148"/>
    </location>
</feature>
<feature type="modified residue" description="N6-acetyllysine" evidence="1">
    <location>
        <position position="152"/>
    </location>
</feature>
<feature type="sequence conflict" description="In Ref. 1; AA sequence." evidence="3" ref="1">
    <original>C</original>
    <variation>Y</variation>
    <location>
        <position position="139"/>
    </location>
</feature>
<feature type="sequence conflict" description="In Ref. 1; AA sequence." evidence="3" ref="1">
    <original>T</original>
    <variation>Q</variation>
    <location>
        <position position="158"/>
    </location>
</feature>
<evidence type="ECO:0000250" key="1">
    <source>
        <dbReference type="UniProtKB" id="P78417"/>
    </source>
</evidence>
<evidence type="ECO:0000269" key="2">
    <source>
    </source>
</evidence>
<evidence type="ECO:0000305" key="3"/>
<dbReference type="EC" id="2.5.1.18" evidence="1"/>
<dbReference type="EC" id="1.8.5.1" evidence="1"/>
<dbReference type="EC" id="1.20.4.2" evidence="1"/>
<dbReference type="EMBL" id="AF188838">
    <property type="protein sequence ID" value="AAF71994.2"/>
    <property type="molecule type" value="mRNA"/>
</dbReference>
<dbReference type="RefSeq" id="NP_999215.1">
    <property type="nucleotide sequence ID" value="NM_214050.2"/>
</dbReference>
<dbReference type="SMR" id="Q9N1F5"/>
<dbReference type="FunCoup" id="Q9N1F5">
    <property type="interactions" value="663"/>
</dbReference>
<dbReference type="STRING" id="9823.ENSSSCP00000011305"/>
<dbReference type="PaxDb" id="9823-ENSSSCP00000011305"/>
<dbReference type="PeptideAtlas" id="Q9N1F5"/>
<dbReference type="Ensembl" id="ENSSSCT00000011607.4">
    <property type="protein sequence ID" value="ENSSSCP00000011305.2"/>
    <property type="gene ID" value="ENSSSCG00000022351.3"/>
</dbReference>
<dbReference type="Ensembl" id="ENSSSCT00015047497.1">
    <property type="protein sequence ID" value="ENSSSCP00015018811.1"/>
    <property type="gene ID" value="ENSSSCG00015035687.1"/>
</dbReference>
<dbReference type="Ensembl" id="ENSSSCT00025094544.1">
    <property type="protein sequence ID" value="ENSSSCP00025041522.1"/>
    <property type="gene ID" value="ENSSSCG00025068774.1"/>
</dbReference>
<dbReference type="Ensembl" id="ENSSSCT00030014022.1">
    <property type="protein sequence ID" value="ENSSSCP00030006281.1"/>
    <property type="gene ID" value="ENSSSCG00030010226.1"/>
</dbReference>
<dbReference type="Ensembl" id="ENSSSCT00035026899.1">
    <property type="protein sequence ID" value="ENSSSCP00035010267.1"/>
    <property type="gene ID" value="ENSSSCG00035020670.1"/>
</dbReference>
<dbReference type="Ensembl" id="ENSSSCT00040039734.1">
    <property type="protein sequence ID" value="ENSSSCP00040016647.1"/>
    <property type="gene ID" value="ENSSSCG00040029505.1"/>
</dbReference>
<dbReference type="Ensembl" id="ENSSSCT00045030324.1">
    <property type="protein sequence ID" value="ENSSSCP00045021014.1"/>
    <property type="gene ID" value="ENSSSCG00045017747.1"/>
</dbReference>
<dbReference type="Ensembl" id="ENSSSCT00050076822.1">
    <property type="protein sequence ID" value="ENSSSCP00050033094.1"/>
    <property type="gene ID" value="ENSSSCG00050056308.1"/>
</dbReference>
<dbReference type="Ensembl" id="ENSSSCT00060079326.1">
    <property type="protein sequence ID" value="ENSSSCP00060034315.1"/>
    <property type="gene ID" value="ENSSSCG00060058178.1"/>
</dbReference>
<dbReference type="Ensembl" id="ENSSSCT00065017932.1">
    <property type="protein sequence ID" value="ENSSSCP00065007312.1"/>
    <property type="gene ID" value="ENSSSCG00065013486.1"/>
</dbReference>
<dbReference type="Ensembl" id="ENSSSCT00070020016.1">
    <property type="protein sequence ID" value="ENSSSCP00070016635.1"/>
    <property type="gene ID" value="ENSSSCG00070010275.1"/>
</dbReference>
<dbReference type="Ensembl" id="ENSSSCT00115013199">
    <property type="protein sequence ID" value="ENSSSCP00115012469"/>
    <property type="gene ID" value="ENSSSCG00115007541"/>
</dbReference>
<dbReference type="Ensembl" id="ENSSSCT00130008355">
    <property type="protein sequence ID" value="ENSSSCP00130005646"/>
    <property type="gene ID" value="ENSSSCG00130004482"/>
</dbReference>
<dbReference type="GeneID" id="397117"/>
<dbReference type="KEGG" id="ssc:397117"/>
<dbReference type="CTD" id="9446"/>
<dbReference type="eggNOG" id="KOG0406">
    <property type="taxonomic scope" value="Eukaryota"/>
</dbReference>
<dbReference type="GeneTree" id="ENSGT00940000155351"/>
<dbReference type="HOGENOM" id="CLU_011226_9_2_1"/>
<dbReference type="InParanoid" id="Q9N1F5"/>
<dbReference type="OMA" id="ADHYSHR"/>
<dbReference type="OrthoDB" id="4951845at2759"/>
<dbReference type="TreeFam" id="TF105325"/>
<dbReference type="BRENDA" id="2.5.1.18">
    <property type="organism ID" value="6170"/>
</dbReference>
<dbReference type="Reactome" id="R-SSC-156581">
    <property type="pathway name" value="Methylation"/>
</dbReference>
<dbReference type="Reactome" id="R-SSC-156590">
    <property type="pathway name" value="Glutathione conjugation"/>
</dbReference>
<dbReference type="Reactome" id="R-SSC-196836">
    <property type="pathway name" value="Vitamin C (ascorbate) metabolism"/>
</dbReference>
<dbReference type="Proteomes" id="UP000008227">
    <property type="component" value="Chromosome 14"/>
</dbReference>
<dbReference type="Proteomes" id="UP000314985">
    <property type="component" value="Chromosome 14"/>
</dbReference>
<dbReference type="Proteomes" id="UP000694570">
    <property type="component" value="Unplaced"/>
</dbReference>
<dbReference type="Proteomes" id="UP000694571">
    <property type="component" value="Unplaced"/>
</dbReference>
<dbReference type="Proteomes" id="UP000694720">
    <property type="component" value="Unplaced"/>
</dbReference>
<dbReference type="Proteomes" id="UP000694722">
    <property type="component" value="Unplaced"/>
</dbReference>
<dbReference type="Proteomes" id="UP000694723">
    <property type="component" value="Unplaced"/>
</dbReference>
<dbReference type="Proteomes" id="UP000694724">
    <property type="component" value="Unplaced"/>
</dbReference>
<dbReference type="Proteomes" id="UP000694725">
    <property type="component" value="Unplaced"/>
</dbReference>
<dbReference type="Proteomes" id="UP000694726">
    <property type="component" value="Unplaced"/>
</dbReference>
<dbReference type="Proteomes" id="UP000694727">
    <property type="component" value="Unplaced"/>
</dbReference>
<dbReference type="Proteomes" id="UP000694728">
    <property type="component" value="Unplaced"/>
</dbReference>
<dbReference type="Bgee" id="ENSSSCG00000022351">
    <property type="expression patterns" value="Expressed in liver and 43 other cell types or tissues"/>
</dbReference>
<dbReference type="ExpressionAtlas" id="Q9N1F5">
    <property type="expression patterns" value="baseline and differential"/>
</dbReference>
<dbReference type="GO" id="GO:0005737">
    <property type="term" value="C:cytoplasm"/>
    <property type="evidence" value="ECO:0000250"/>
    <property type="project" value="UniProtKB"/>
</dbReference>
<dbReference type="GO" id="GO:0005829">
    <property type="term" value="C:cytosol"/>
    <property type="evidence" value="ECO:0007669"/>
    <property type="project" value="UniProtKB-SubCell"/>
</dbReference>
<dbReference type="GO" id="GO:0045174">
    <property type="term" value="F:glutathione dehydrogenase (ascorbate) activity"/>
    <property type="evidence" value="ECO:0000250"/>
    <property type="project" value="UniProtKB"/>
</dbReference>
<dbReference type="GO" id="GO:0004364">
    <property type="term" value="F:glutathione transferase activity"/>
    <property type="evidence" value="ECO:0000250"/>
    <property type="project" value="UniProtKB"/>
</dbReference>
<dbReference type="GO" id="GO:0050610">
    <property type="term" value="F:methylarsonate reductase activity"/>
    <property type="evidence" value="ECO:0007669"/>
    <property type="project" value="UniProtKB-EC"/>
</dbReference>
<dbReference type="GO" id="GO:0016491">
    <property type="term" value="F:oxidoreductase activity"/>
    <property type="evidence" value="ECO:0000250"/>
    <property type="project" value="UniProtKB"/>
</dbReference>
<dbReference type="GO" id="GO:0071243">
    <property type="term" value="P:cellular response to arsenic-containing substance"/>
    <property type="evidence" value="ECO:0000250"/>
    <property type="project" value="UniProtKB"/>
</dbReference>
<dbReference type="GO" id="GO:0006749">
    <property type="term" value="P:glutathione metabolic process"/>
    <property type="evidence" value="ECO:0000318"/>
    <property type="project" value="GO_Central"/>
</dbReference>
<dbReference type="GO" id="GO:0019852">
    <property type="term" value="P:L-ascorbic acid metabolic process"/>
    <property type="evidence" value="ECO:0000250"/>
    <property type="project" value="UniProtKB"/>
</dbReference>
<dbReference type="GO" id="GO:0042178">
    <property type="term" value="P:xenobiotic catabolic process"/>
    <property type="evidence" value="ECO:0000250"/>
    <property type="project" value="UniProtKB"/>
</dbReference>
<dbReference type="CDD" id="cd03184">
    <property type="entry name" value="GST_C_Omega"/>
    <property type="match status" value="1"/>
</dbReference>
<dbReference type="CDD" id="cd03055">
    <property type="entry name" value="GST_N_Omega"/>
    <property type="match status" value="1"/>
</dbReference>
<dbReference type="FunFam" id="1.20.1050.10:FF:000009">
    <property type="entry name" value="Glutathione S-transferase omega-1"/>
    <property type="match status" value="1"/>
</dbReference>
<dbReference type="FunFam" id="3.40.30.10:FF:000075">
    <property type="entry name" value="Glutathione S-transferase omega-1"/>
    <property type="match status" value="1"/>
</dbReference>
<dbReference type="Gene3D" id="1.20.1050.10">
    <property type="match status" value="1"/>
</dbReference>
<dbReference type="Gene3D" id="3.40.30.10">
    <property type="entry name" value="Glutaredoxin"/>
    <property type="match status" value="1"/>
</dbReference>
<dbReference type="InterPro" id="IPR010987">
    <property type="entry name" value="Glutathione-S-Trfase_C-like"/>
</dbReference>
<dbReference type="InterPro" id="IPR036282">
    <property type="entry name" value="Glutathione-S-Trfase_C_sf"/>
</dbReference>
<dbReference type="InterPro" id="IPR040079">
    <property type="entry name" value="Glutathione_S-Trfase"/>
</dbReference>
<dbReference type="InterPro" id="IPR004045">
    <property type="entry name" value="Glutathione_S-Trfase_N"/>
</dbReference>
<dbReference type="InterPro" id="IPR004046">
    <property type="entry name" value="GST_C"/>
</dbReference>
<dbReference type="InterPro" id="IPR005442">
    <property type="entry name" value="GST_omega"/>
</dbReference>
<dbReference type="InterPro" id="IPR050983">
    <property type="entry name" value="GST_Omega/HSP26"/>
</dbReference>
<dbReference type="InterPro" id="IPR036249">
    <property type="entry name" value="Thioredoxin-like_sf"/>
</dbReference>
<dbReference type="PANTHER" id="PTHR43968">
    <property type="match status" value="1"/>
</dbReference>
<dbReference type="PANTHER" id="PTHR43968:SF5">
    <property type="entry name" value="GLUTATHIONE S-TRANSFERASE OMEGA-1"/>
    <property type="match status" value="1"/>
</dbReference>
<dbReference type="Pfam" id="PF14497">
    <property type="entry name" value="GST_C_3"/>
    <property type="match status" value="1"/>
</dbReference>
<dbReference type="Pfam" id="PF13409">
    <property type="entry name" value="GST_N_2"/>
    <property type="match status" value="1"/>
</dbReference>
<dbReference type="PRINTS" id="PR01625">
    <property type="entry name" value="GSTRNSFRASEO"/>
</dbReference>
<dbReference type="SFLD" id="SFLDS00019">
    <property type="entry name" value="Glutathione_Transferase_(cytos"/>
    <property type="match status" value="1"/>
</dbReference>
<dbReference type="SFLD" id="SFLDG00358">
    <property type="entry name" value="Main_(cytGST)"/>
    <property type="match status" value="1"/>
</dbReference>
<dbReference type="SUPFAM" id="SSF47616">
    <property type="entry name" value="GST C-terminal domain-like"/>
    <property type="match status" value="1"/>
</dbReference>
<dbReference type="SUPFAM" id="SSF52833">
    <property type="entry name" value="Thioredoxin-like"/>
    <property type="match status" value="1"/>
</dbReference>
<dbReference type="PROSITE" id="PS50405">
    <property type="entry name" value="GST_CTER"/>
    <property type="match status" value="1"/>
</dbReference>
<dbReference type="PROSITE" id="PS50404">
    <property type="entry name" value="GST_NTER"/>
    <property type="match status" value="1"/>
</dbReference>
<keyword id="KW-0007">Acetylation</keyword>
<keyword id="KW-0963">Cytoplasm</keyword>
<keyword id="KW-0903">Direct protein sequencing</keyword>
<keyword id="KW-0560">Oxidoreductase</keyword>
<keyword id="KW-1185">Reference proteome</keyword>
<keyword id="KW-0808">Transferase</keyword>
<sequence length="241" mass="27419">MSGGSARSLGKGSAPPGPVPEGLIRVYSMRFCPFAQRTLLVLNAKGIRHQVININLKNKPEWFFQKNPSGLVPVLENSQGQLIYESAITCEYLDEAYPGKKLLPDDPYEKACQKMVFELSSKVPPLLIRFIRRENEADCSGLKEELRKEFSKLEEVLTKKKTTYFGGSSLSMIDYLIWPWFERLEALELNECIDHTPKLKLWMAAMMKDPAVSALHIEPRDLRAFNDLYLQNSPEACDYGL</sequence>
<reference key="1">
    <citation type="journal article" date="2001" name="Biochem. J.">
        <title>Purification and characterization of a glutathione S-transferase Omega in pig: evidence for two distinct organ-specific transcripts.</title>
        <authorList>
            <person name="Rouimi P."/>
            <person name="Anglade P."/>
            <person name="Benzekri A."/>
            <person name="Costet P."/>
            <person name="Debrauwer L."/>
            <person name="Pineau T."/>
            <person name="Tulliez J."/>
        </authorList>
    </citation>
    <scope>NUCLEOTIDE SEQUENCE [MRNA]</scope>
    <scope>PROTEIN SEQUENCE OF 5-31; 58-83; 101-110; 115-147; 149-160; 162-190; 201-228 AND 235-241</scope>
    <scope>SUBUNIT</scope>
    <scope>SUBCELLULAR LOCATION</scope>
    <scope>TISSUE SPECIFICITY</scope>
    <scope>MASS SPECTROMETRY</scope>
    <source>
        <tissue>Liver</tissue>
    </source>
</reference>
<accession>Q9N1F5</accession>
<name>GSTO1_PIG</name>
<organism>
    <name type="scientific">Sus scrofa</name>
    <name type="common">Pig</name>
    <dbReference type="NCBI Taxonomy" id="9823"/>
    <lineage>
        <taxon>Eukaryota</taxon>
        <taxon>Metazoa</taxon>
        <taxon>Chordata</taxon>
        <taxon>Craniata</taxon>
        <taxon>Vertebrata</taxon>
        <taxon>Euteleostomi</taxon>
        <taxon>Mammalia</taxon>
        <taxon>Eutheria</taxon>
        <taxon>Laurasiatheria</taxon>
        <taxon>Artiodactyla</taxon>
        <taxon>Suina</taxon>
        <taxon>Suidae</taxon>
        <taxon>Sus</taxon>
    </lineage>
</organism>
<gene>
    <name type="primary">GSTO1</name>
</gene>
<comment type="function">
    <text evidence="1">Exhibits glutathione-dependent thiol transferase and dehydroascorbate reductase activities. Has S-(phenacyl)glutathione reductase activity. Also has glutathione S-transferase activity. Participates in the biotransformation of inorganic arsenic and reduces monomethylarsonic acid (MMA) and dimethylarsonic acid.</text>
</comment>
<comment type="catalytic activity">
    <reaction evidence="1">
        <text>RX + glutathione = an S-substituted glutathione + a halide anion + H(+)</text>
        <dbReference type="Rhea" id="RHEA:16437"/>
        <dbReference type="ChEBI" id="CHEBI:15378"/>
        <dbReference type="ChEBI" id="CHEBI:16042"/>
        <dbReference type="ChEBI" id="CHEBI:17792"/>
        <dbReference type="ChEBI" id="CHEBI:57925"/>
        <dbReference type="ChEBI" id="CHEBI:90779"/>
        <dbReference type="EC" id="2.5.1.18"/>
    </reaction>
</comment>
<comment type="catalytic activity">
    <reaction evidence="1">
        <text>L-dehydroascorbate + 2 glutathione = glutathione disulfide + L-ascorbate</text>
        <dbReference type="Rhea" id="RHEA:24424"/>
        <dbReference type="ChEBI" id="CHEBI:38290"/>
        <dbReference type="ChEBI" id="CHEBI:57925"/>
        <dbReference type="ChEBI" id="CHEBI:58297"/>
        <dbReference type="ChEBI" id="CHEBI:58539"/>
        <dbReference type="EC" id="1.8.5.1"/>
    </reaction>
</comment>
<comment type="catalytic activity">
    <reaction evidence="1">
        <text>methylarsonate + 2 glutathione + H(+) = methylarsonous acid + glutathione disulfide + H2O</text>
        <dbReference type="Rhea" id="RHEA:15969"/>
        <dbReference type="ChEBI" id="CHEBI:15377"/>
        <dbReference type="ChEBI" id="CHEBI:15378"/>
        <dbReference type="ChEBI" id="CHEBI:17826"/>
        <dbReference type="ChEBI" id="CHEBI:33409"/>
        <dbReference type="ChEBI" id="CHEBI:57925"/>
        <dbReference type="ChEBI" id="CHEBI:58297"/>
        <dbReference type="EC" id="1.20.4.2"/>
    </reaction>
</comment>
<comment type="subunit">
    <text evidence="2">Homodimer.</text>
</comment>
<comment type="subcellular location">
    <subcellularLocation>
        <location evidence="2">Cytoplasm</location>
        <location evidence="2">Cytosol</location>
    </subcellularLocation>
</comment>
<comment type="tissue specificity">
    <text evidence="2">Most abundant in the liver and skeletal muscle; also expressed in heart, diaphragm, colon, thymus, kidney, lung, ovaries, spleen, intestine and pancreas.</text>
</comment>
<comment type="mass spectrometry" mass="27328.0" error="3.0" method="Electrospray" evidence="2"/>
<comment type="similarity">
    <text evidence="3">Belongs to the GST superfamily. Omega family.</text>
</comment>
<proteinExistence type="evidence at protein level"/>
<protein>
    <recommendedName>
        <fullName>Glutathione S-transferase omega-1</fullName>
        <shortName>GSTO-1</shortName>
        <ecNumber evidence="1">2.5.1.18</ecNumber>
    </recommendedName>
    <alternativeName>
        <fullName>Glutathione S-transferase omega 1-1</fullName>
        <shortName>GSTO 1-1</shortName>
    </alternativeName>
    <alternativeName>
        <fullName>Glutathione-dependent dehydroascorbate reductase</fullName>
        <ecNumber evidence="1">1.8.5.1</ecNumber>
    </alternativeName>
    <alternativeName>
        <fullName>Monomethylarsonic acid reductase</fullName>
        <shortName>MMA(V) reductase</shortName>
        <ecNumber evidence="1">1.20.4.2</ecNumber>
    </alternativeName>
    <alternativeName>
        <fullName>S-(Phenacyl)glutathione reductase</fullName>
        <shortName>SPG-R</shortName>
    </alternativeName>
</protein>